<keyword id="KW-0150">Chloroplast</keyword>
<keyword id="KW-0934">Plastid</keyword>
<keyword id="KW-1185">Reference proteome</keyword>
<keyword id="KW-0687">Ribonucleoprotein</keyword>
<keyword id="KW-0689">Ribosomal protein</keyword>
<comment type="subunit">
    <text evidence="1">Part of the 30S ribosomal subunit.</text>
</comment>
<comment type="subcellular location">
    <subcellularLocation>
        <location>Plastid</location>
        <location>Chloroplast</location>
    </subcellularLocation>
</comment>
<comment type="similarity">
    <text evidence="2">Belongs to the universal ribosomal protein uS15 family.</text>
</comment>
<organism>
    <name type="scientific">Oryza sativa subsp. indica</name>
    <name type="common">Rice</name>
    <dbReference type="NCBI Taxonomy" id="39946"/>
    <lineage>
        <taxon>Eukaryota</taxon>
        <taxon>Viridiplantae</taxon>
        <taxon>Streptophyta</taxon>
        <taxon>Embryophyta</taxon>
        <taxon>Tracheophyta</taxon>
        <taxon>Spermatophyta</taxon>
        <taxon>Magnoliopsida</taxon>
        <taxon>Liliopsida</taxon>
        <taxon>Poales</taxon>
        <taxon>Poaceae</taxon>
        <taxon>BOP clade</taxon>
        <taxon>Oryzoideae</taxon>
        <taxon>Oryzeae</taxon>
        <taxon>Oryzinae</taxon>
        <taxon>Oryza</taxon>
        <taxon>Oryza sativa</taxon>
    </lineage>
</organism>
<feature type="chain" id="PRO_0000290064" description="Small ribosomal subunit protein uS15c">
    <location>
        <begin position="1"/>
        <end position="90"/>
    </location>
</feature>
<name>RR15_ORYSI</name>
<reference key="1">
    <citation type="journal article" date="2004" name="Plant Physiol.">
        <title>A comparison of rice chloroplast genomes.</title>
        <authorList>
            <person name="Tang J."/>
            <person name="Xia H."/>
            <person name="Cao M."/>
            <person name="Zhang X."/>
            <person name="Zeng W."/>
            <person name="Hu S."/>
            <person name="Tong W."/>
            <person name="Wang J."/>
            <person name="Wang J."/>
            <person name="Yu J."/>
            <person name="Yang H."/>
            <person name="Zhu L."/>
        </authorList>
    </citation>
    <scope>NUCLEOTIDE SEQUENCE [LARGE SCALE GENOMIC DNA]</scope>
    <source>
        <strain>cv. 93-11</strain>
    </source>
</reference>
<gene>
    <name type="primary">rps15-A</name>
    <name type="ORF">9311161</name>
</gene>
<gene>
    <name type="primary">rps15-B</name>
</gene>
<proteinExistence type="inferred from homology"/>
<geneLocation type="chloroplast"/>
<sequence length="90" mass="10882">MKKKGGRKIFGFMVKEEKEENWGSVEFQVFSFTNKIRRLASHLELHKKDFSSERGLRRLLGKRQRLLAYLAKKNRVRYKKLISQLDIRER</sequence>
<dbReference type="EMBL" id="AY522329">
    <property type="protein sequence ID" value="AAS46087.1"/>
    <property type="molecule type" value="Genomic_DNA"/>
</dbReference>
<dbReference type="EMBL" id="AY522329">
    <property type="protein sequence ID" value="AAS46098.1"/>
    <property type="molecule type" value="Genomic_DNA"/>
</dbReference>
<dbReference type="RefSeq" id="YP_009161414.1">
    <property type="nucleotide sequence ID" value="NC_027678.1"/>
</dbReference>
<dbReference type="RefSeq" id="YP_009161426.1">
    <property type="nucleotide sequence ID" value="NC_027678.1"/>
</dbReference>
<dbReference type="SMR" id="P0C469"/>
<dbReference type="STRING" id="39946.P0C469"/>
<dbReference type="Proteomes" id="UP000007015">
    <property type="component" value="Chloroplast"/>
</dbReference>
<dbReference type="GO" id="GO:0009507">
    <property type="term" value="C:chloroplast"/>
    <property type="evidence" value="ECO:0007669"/>
    <property type="project" value="UniProtKB-SubCell"/>
</dbReference>
<dbReference type="GO" id="GO:0009536">
    <property type="term" value="C:plastid"/>
    <property type="evidence" value="ECO:0000305"/>
    <property type="project" value="Gramene"/>
</dbReference>
<dbReference type="GO" id="GO:1990904">
    <property type="term" value="C:ribonucleoprotein complex"/>
    <property type="evidence" value="ECO:0007669"/>
    <property type="project" value="UniProtKB-KW"/>
</dbReference>
<dbReference type="GO" id="GO:0005840">
    <property type="term" value="C:ribosome"/>
    <property type="evidence" value="ECO:0007669"/>
    <property type="project" value="UniProtKB-KW"/>
</dbReference>
<dbReference type="GO" id="GO:0003735">
    <property type="term" value="F:structural constituent of ribosome"/>
    <property type="evidence" value="ECO:0007669"/>
    <property type="project" value="InterPro"/>
</dbReference>
<dbReference type="GO" id="GO:0006412">
    <property type="term" value="P:translation"/>
    <property type="evidence" value="ECO:0007669"/>
    <property type="project" value="UniProtKB-UniRule"/>
</dbReference>
<dbReference type="CDD" id="cd00353">
    <property type="entry name" value="Ribosomal_S15p_S13e"/>
    <property type="match status" value="1"/>
</dbReference>
<dbReference type="Gene3D" id="1.10.287.10">
    <property type="entry name" value="S15/NS1, RNA-binding"/>
    <property type="match status" value="1"/>
</dbReference>
<dbReference type="HAMAP" id="MF_01343_B">
    <property type="entry name" value="Ribosomal_uS15_B"/>
    <property type="match status" value="1"/>
</dbReference>
<dbReference type="InterPro" id="IPR000589">
    <property type="entry name" value="Ribosomal_uS15"/>
</dbReference>
<dbReference type="InterPro" id="IPR005290">
    <property type="entry name" value="Ribosomal_uS15_bac-type"/>
</dbReference>
<dbReference type="InterPro" id="IPR009068">
    <property type="entry name" value="uS15_NS1_RNA-bd_sf"/>
</dbReference>
<dbReference type="NCBIfam" id="TIGR00952">
    <property type="entry name" value="S15_bact"/>
    <property type="match status" value="1"/>
</dbReference>
<dbReference type="PANTHER" id="PTHR23321">
    <property type="entry name" value="RIBOSOMAL PROTEIN S15, BACTERIAL AND ORGANELLAR"/>
    <property type="match status" value="1"/>
</dbReference>
<dbReference type="PANTHER" id="PTHR23321:SF26">
    <property type="entry name" value="SMALL RIBOSOMAL SUBUNIT PROTEIN US15M"/>
    <property type="match status" value="1"/>
</dbReference>
<dbReference type="Pfam" id="PF00312">
    <property type="entry name" value="Ribosomal_S15"/>
    <property type="match status" value="1"/>
</dbReference>
<dbReference type="SMART" id="SM01387">
    <property type="entry name" value="Ribosomal_S15"/>
    <property type="match status" value="1"/>
</dbReference>
<dbReference type="SUPFAM" id="SSF47060">
    <property type="entry name" value="S15/NS1 RNA-binding domain"/>
    <property type="match status" value="1"/>
</dbReference>
<dbReference type="PROSITE" id="PS00362">
    <property type="entry name" value="RIBOSOMAL_S15"/>
    <property type="match status" value="1"/>
</dbReference>
<evidence type="ECO:0000250" key="1"/>
<evidence type="ECO:0000305" key="2"/>
<accession>P0C469</accession>
<accession>P12150</accession>
<accession>Q6QXX9</accession>
<accession>Q6QY31</accession>
<protein>
    <recommendedName>
        <fullName evidence="2">Small ribosomal subunit protein uS15c</fullName>
    </recommendedName>
    <alternativeName>
        <fullName>30S ribosomal protein S15, chloroplastic</fullName>
    </alternativeName>
</protein>